<protein>
    <recommendedName>
        <fullName>Protein HIRA</fullName>
    </recommendedName>
</protein>
<keyword id="KW-0156">Chromatin regulator</keyword>
<keyword id="KW-0539">Nucleus</keyword>
<keyword id="KW-1185">Reference proteome</keyword>
<keyword id="KW-0677">Repeat</keyword>
<keyword id="KW-0678">Repressor</keyword>
<keyword id="KW-0804">Transcription</keyword>
<keyword id="KW-0805">Transcription regulation</keyword>
<keyword id="KW-0853">WD repeat</keyword>
<name>HIRA_XENLA</name>
<evidence type="ECO:0000250" key="1"/>
<evidence type="ECO:0000256" key="2">
    <source>
        <dbReference type="SAM" id="MobiDB-lite"/>
    </source>
</evidence>
<evidence type="ECO:0000269" key="3">
    <source>
    </source>
</evidence>
<evidence type="ECO:0000269" key="4">
    <source>
    </source>
</evidence>
<evidence type="ECO:0000305" key="5"/>
<sequence>MKLLKPSWVNHNGKPIFSVDIHPDGTKFATGGQGQDSGKVVIWNMPPMLKEEDEKNENIPKMLCQMDNHLACVNCVRWSNNGAYLASGGDDKLIMVWKRSGYIGPSTVFGSSSKLANVEQWRCLSILRSHSGDVMDVAWSPHDAWLASCSVDNTVVIWNALKFPEIISTLRGHSGLVKGLTWDPVGKYIASQADDHSIKVWRTMDWQLETSITKPFDECGGTTHVLRLSWSPDGHYLVSAHAMNNSGPTAQIIERDGWKTNMDFVGHRKAVTVVKFNPKIFKKKQKNGSSTKTSCPYCCCAVGSKDRSLSVWLTCLKRPLVVIHELFDKSIMDISWTLNGLGILVCSMDGSVAYLDFSQDELGDPLSEEEKNNIHQSTYGKSLAITTEPQLPNTVIENPEMLKFQQRQQLQQDGEHMVQAQMEAPIHNMASMMNGESLEDIRKNLLKKQVETRTADGRRRITPLCIAQLDTGDFSTAFFNSIPISGSLPGSMMSSQSNQQLISLDSNTTSSSGALKSNVELVGNNTKPAEETANKESGNVSSSSPVAPTSITAQPKIEPMKALDSRFTERSKATSGTAGVAHLNQTAVDRLKEQNVTKDSKPRVVESSSDSEEKIPASKQLSKRKGEADADLAEKRKKGRPRKESQRLMSVSLTVQSQVASTSEKELTCVTTSSLTLRLPTPTPQKSFTLQLSSDPSMYIEVENEVKTVGGNKLSQLKCHREGKEWEAVLTSRIVAAAGSKEVVCVACEKRMLSIFSGSGRRIFPPIILPSPISTLQCTGSYVMALTAAAALSVWDVQNQNIIIKNESLQPLLSGNDLTVSQTLLTKRGIPVLSLSNGKAYCFSPSLSTWSLVSDKQDSLAQCADYRSCMPSQDAVMCSGPLAIIQGRVSNAGRQAAHLFTMPHLVQKETTMAYLENQVAAALMLQSSQEYRHWLLIYAQYLVNEGFEQRLREVCQDLLGPVHRSSDSQWESRILGLWKRELLKELLPLIGQNLRFQRLFTEYQEQLDILRDK</sequence>
<dbReference type="EMBL" id="AJ278386">
    <property type="protein sequence ID" value="CAC41092.1"/>
    <property type="molecule type" value="mRNA"/>
</dbReference>
<dbReference type="EMBL" id="AJ278387">
    <property type="protein sequence ID" value="CAC41093.1"/>
    <property type="molecule type" value="mRNA"/>
</dbReference>
<dbReference type="EMBL" id="AJ404369">
    <property type="protein sequence ID" value="CAC81987.1"/>
    <property type="molecule type" value="mRNA"/>
</dbReference>
<dbReference type="EMBL" id="BC078007">
    <property type="protein sequence ID" value="AAH78007.1"/>
    <property type="molecule type" value="mRNA"/>
</dbReference>
<dbReference type="SMR" id="Q8QFR2"/>
<dbReference type="BioGRID" id="98943">
    <property type="interactions" value="4"/>
</dbReference>
<dbReference type="IntAct" id="Q8QFR2">
    <property type="interactions" value="1"/>
</dbReference>
<dbReference type="AGR" id="Xenbase:XB-GENE-976075"/>
<dbReference type="Xenbase" id="XB-GENE-976075">
    <property type="gene designation" value="hira.S"/>
</dbReference>
<dbReference type="OrthoDB" id="1741719at2759"/>
<dbReference type="Proteomes" id="UP000186698">
    <property type="component" value="Unplaced"/>
</dbReference>
<dbReference type="GO" id="GO:0000785">
    <property type="term" value="C:chromatin"/>
    <property type="evidence" value="ECO:0000318"/>
    <property type="project" value="GO_Central"/>
</dbReference>
<dbReference type="GO" id="GO:0000417">
    <property type="term" value="C:HIR complex"/>
    <property type="evidence" value="ECO:0000318"/>
    <property type="project" value="GO_Central"/>
</dbReference>
<dbReference type="GO" id="GO:0005634">
    <property type="term" value="C:nucleus"/>
    <property type="evidence" value="ECO:0007669"/>
    <property type="project" value="UniProtKB-SubCell"/>
</dbReference>
<dbReference type="GO" id="GO:0031491">
    <property type="term" value="F:nucleosome binding"/>
    <property type="evidence" value="ECO:0007669"/>
    <property type="project" value="TreeGrafter"/>
</dbReference>
<dbReference type="GO" id="GO:0006338">
    <property type="term" value="P:chromatin remodeling"/>
    <property type="evidence" value="ECO:0000318"/>
    <property type="project" value="GO_Central"/>
</dbReference>
<dbReference type="GO" id="GO:0006351">
    <property type="term" value="P:DNA-templated transcription"/>
    <property type="evidence" value="ECO:0007669"/>
    <property type="project" value="InterPro"/>
</dbReference>
<dbReference type="GO" id="GO:0006334">
    <property type="term" value="P:nucleosome assembly"/>
    <property type="evidence" value="ECO:0000315"/>
    <property type="project" value="GO_Central"/>
</dbReference>
<dbReference type="GO" id="GO:0006355">
    <property type="term" value="P:regulation of DNA-templated transcription"/>
    <property type="evidence" value="ECO:0007669"/>
    <property type="project" value="InterPro"/>
</dbReference>
<dbReference type="CDD" id="cd00200">
    <property type="entry name" value="WD40"/>
    <property type="match status" value="1"/>
</dbReference>
<dbReference type="FunFam" id="2.130.10.10:FF:000075">
    <property type="entry name" value="Protein HIRA"/>
    <property type="match status" value="1"/>
</dbReference>
<dbReference type="FunFam" id="2.130.10.10:FF:000105">
    <property type="entry name" value="Protein HIRA"/>
    <property type="match status" value="1"/>
</dbReference>
<dbReference type="Gene3D" id="2.130.10.10">
    <property type="entry name" value="YVTN repeat-like/Quinoprotein amine dehydrogenase"/>
    <property type="match status" value="2"/>
</dbReference>
<dbReference type="InterPro" id="IPR055410">
    <property type="entry name" value="CAF1B_HIR1_beta-prop"/>
</dbReference>
<dbReference type="InterPro" id="IPR031120">
    <property type="entry name" value="HIR1-like"/>
</dbReference>
<dbReference type="InterPro" id="IPR011494">
    <property type="entry name" value="HIRA-like_C"/>
</dbReference>
<dbReference type="InterPro" id="IPR015943">
    <property type="entry name" value="WD40/YVTN_repeat-like_dom_sf"/>
</dbReference>
<dbReference type="InterPro" id="IPR036322">
    <property type="entry name" value="WD40_repeat_dom_sf"/>
</dbReference>
<dbReference type="InterPro" id="IPR001680">
    <property type="entry name" value="WD40_rpt"/>
</dbReference>
<dbReference type="PANTHER" id="PTHR13831">
    <property type="entry name" value="MEMBER OF THE HIR1 FAMILY OF WD-REPEAT PROTEINS"/>
    <property type="match status" value="1"/>
</dbReference>
<dbReference type="PANTHER" id="PTHR13831:SF0">
    <property type="entry name" value="PROTEIN HIRA"/>
    <property type="match status" value="1"/>
</dbReference>
<dbReference type="Pfam" id="PF24105">
    <property type="entry name" value="Beta-prop_CAF1B_HIR1"/>
    <property type="match status" value="1"/>
</dbReference>
<dbReference type="Pfam" id="PF07569">
    <property type="entry name" value="Hira"/>
    <property type="match status" value="1"/>
</dbReference>
<dbReference type="SMART" id="SM00320">
    <property type="entry name" value="WD40"/>
    <property type="match status" value="7"/>
</dbReference>
<dbReference type="SUPFAM" id="SSF50978">
    <property type="entry name" value="WD40 repeat-like"/>
    <property type="match status" value="1"/>
</dbReference>
<dbReference type="PROSITE" id="PS00678">
    <property type="entry name" value="WD_REPEATS_1"/>
    <property type="match status" value="1"/>
</dbReference>
<dbReference type="PROSITE" id="PS50082">
    <property type="entry name" value="WD_REPEATS_2"/>
    <property type="match status" value="3"/>
</dbReference>
<dbReference type="PROSITE" id="PS50294">
    <property type="entry name" value="WD_REPEATS_REGION"/>
    <property type="match status" value="1"/>
</dbReference>
<feature type="chain" id="PRO_0000286423" description="Protein HIRA">
    <location>
        <begin position="1"/>
        <end position="1013"/>
    </location>
</feature>
<feature type="repeat" description="WD 1">
    <location>
        <begin position="11"/>
        <end position="53"/>
    </location>
</feature>
<feature type="repeat" description="WD 2">
    <location>
        <begin position="68"/>
        <end position="107"/>
    </location>
</feature>
<feature type="repeat" description="WD 3">
    <location>
        <begin position="129"/>
        <end position="168"/>
    </location>
</feature>
<feature type="repeat" description="WD 4">
    <location>
        <begin position="172"/>
        <end position="211"/>
    </location>
</feature>
<feature type="repeat" description="WD 5">
    <location>
        <begin position="220"/>
        <end position="263"/>
    </location>
</feature>
<feature type="repeat" description="WD 6">
    <location>
        <begin position="266"/>
        <end position="322"/>
    </location>
</feature>
<feature type="repeat" description="WD 7">
    <location>
        <begin position="326"/>
        <end position="367"/>
    </location>
</feature>
<feature type="region of interest" description="Disordered" evidence="2">
    <location>
        <begin position="529"/>
        <end position="648"/>
    </location>
</feature>
<feature type="compositionally biased region" description="Polar residues" evidence="2">
    <location>
        <begin position="535"/>
        <end position="553"/>
    </location>
</feature>
<feature type="compositionally biased region" description="Basic and acidic residues" evidence="2">
    <location>
        <begin position="558"/>
        <end position="572"/>
    </location>
</feature>
<feature type="compositionally biased region" description="Polar residues" evidence="2">
    <location>
        <begin position="573"/>
        <end position="587"/>
    </location>
</feature>
<feature type="compositionally biased region" description="Basic and acidic residues" evidence="2">
    <location>
        <begin position="589"/>
        <end position="604"/>
    </location>
</feature>
<feature type="compositionally biased region" description="Basic and acidic residues" evidence="2">
    <location>
        <begin position="624"/>
        <end position="634"/>
    </location>
</feature>
<feature type="sequence conflict" description="In Ref. 1; CAC81987." evidence="5" ref="1">
    <original>K</original>
    <variation>E</variation>
    <location>
        <position position="39"/>
    </location>
</feature>
<feature type="sequence conflict" description="In Ref. 1; CAC81987." evidence="5" ref="1">
    <original>C</original>
    <variation>R</variation>
    <location>
        <position position="72"/>
    </location>
</feature>
<feature type="sequence conflict" description="In Ref. 1; CAC81987." evidence="5" ref="1">
    <original>S</original>
    <variation>P</variation>
    <location>
        <position position="351"/>
    </location>
</feature>
<feature type="sequence conflict" description="In Ref. 1; CAC41092." evidence="5" ref="1">
    <original>G</original>
    <variation>S</variation>
    <location>
        <position position="363"/>
    </location>
</feature>
<feature type="sequence conflict" description="In Ref. 1; CAC81987." evidence="5" ref="1">
    <original>K</original>
    <variation>R</variation>
    <location>
        <position position="637"/>
    </location>
</feature>
<feature type="sequence conflict" description="In Ref. 1; CAC41092." evidence="5" ref="1">
    <original>R</original>
    <variation>K</variation>
    <location>
        <position position="647"/>
    </location>
</feature>
<feature type="sequence conflict" description="In Ref. 1; CAC81987." evidence="5" ref="1">
    <original>H</original>
    <variation>R</variation>
    <location>
        <position position="720"/>
    </location>
</feature>
<feature type="sequence conflict" description="In Ref. 1; CAC81987." evidence="5" ref="1">
    <original>P</original>
    <variation>S</variation>
    <location>
        <position position="903"/>
    </location>
</feature>
<proteinExistence type="evidence at protein level"/>
<accession>Q8QFR2</accession>
<accession>Q6DCK6</accession>
<accession>Q90YE6</accession>
<accession>Q90YE7</accession>
<comment type="function">
    <text evidence="1 3 4">Required for the periodic repression of histone gene transcription during the cell cycle (By similarity). Required for replication-independent chromatin assembly.</text>
</comment>
<comment type="subunit">
    <text evidence="3">Interacts with histone H2A, histone H2B, histone H3 and histone H4.</text>
</comment>
<comment type="subcellular location">
    <subcellularLocation>
        <location evidence="3">Nucleus</location>
    </subcellularLocation>
</comment>
<comment type="developmental stage">
    <text evidence="3">Expressed during oogenesis from stage IV onwards and throughout early embryonic development.</text>
</comment>
<comment type="similarity">
    <text evidence="5">Belongs to the WD repeat HIR1 family.</text>
</comment>
<reference key="1">
    <citation type="journal article" date="2002" name="Mol. Cell">
        <title>HIRA is critical for a nucleosome assembly pathway independent of DNA synthesis.</title>
        <authorList>
            <person name="Ray-Gallet D."/>
            <person name="Quivy J.-P."/>
            <person name="Scamps C."/>
            <person name="Martini E.M.-D."/>
            <person name="Lipinski M."/>
            <person name="Almouzni G."/>
        </authorList>
    </citation>
    <scope>NUCLEOTIDE SEQUENCE [MRNA]</scope>
    <scope>FUNCTION</scope>
    <scope>INTERACTION WITH HISTONE H2A; HISTONE H2B; HISTONE H3 AND HISTONE H4</scope>
    <scope>SUBCELLULAR LOCATION</scope>
    <scope>DEVELOPMENTAL STAGE</scope>
    <source>
        <tissue>Oocyte</tissue>
    </source>
</reference>
<reference key="2">
    <citation type="submission" date="2004-07" db="EMBL/GenBank/DDBJ databases">
        <authorList>
            <consortium name="NIH - Xenopus Gene Collection (XGC) project"/>
        </authorList>
    </citation>
    <scope>NUCLEOTIDE SEQUENCE [LARGE SCALE MRNA]</scope>
    <source>
        <tissue>Embryo</tissue>
    </source>
</reference>
<reference key="3">
    <citation type="journal article" date="2004" name="Cell">
        <title>Histone H3.1 and H3.3 complexes mediate nucleosome assembly pathways dependent or independent of DNA synthesis.</title>
        <authorList>
            <person name="Tagami H."/>
            <person name="Ray-Gallet D."/>
            <person name="Almouzni G."/>
            <person name="Nakatani Y."/>
        </authorList>
    </citation>
    <scope>FUNCTION</scope>
</reference>
<organism>
    <name type="scientific">Xenopus laevis</name>
    <name type="common">African clawed frog</name>
    <dbReference type="NCBI Taxonomy" id="8355"/>
    <lineage>
        <taxon>Eukaryota</taxon>
        <taxon>Metazoa</taxon>
        <taxon>Chordata</taxon>
        <taxon>Craniata</taxon>
        <taxon>Vertebrata</taxon>
        <taxon>Euteleostomi</taxon>
        <taxon>Amphibia</taxon>
        <taxon>Batrachia</taxon>
        <taxon>Anura</taxon>
        <taxon>Pipoidea</taxon>
        <taxon>Pipidae</taxon>
        <taxon>Xenopodinae</taxon>
        <taxon>Xenopus</taxon>
        <taxon>Xenopus</taxon>
    </lineage>
</organism>
<gene>
    <name type="primary">hira</name>
    <name type="synonym">hira-a</name>
</gene>